<accession>Q32PJ8</accession>
<protein>
    <recommendedName>
        <fullName>Histone deacetylase 1</fullName>
        <shortName>HD1</shortName>
        <ecNumber evidence="4">3.5.1.98</ecNumber>
    </recommendedName>
    <alternativeName>
        <fullName>Protein deacetylase HDAC1</fullName>
        <ecNumber evidence="4">3.5.1.-</ecNumber>
    </alternativeName>
    <alternativeName>
        <fullName>Protein deacylase HDAC1</fullName>
        <ecNumber evidence="4">3.5.1.-</ecNumber>
    </alternativeName>
</protein>
<gene>
    <name type="primary">HDAC1</name>
</gene>
<sequence length="482" mass="55106">MAQTQGTKRKVCYYYDGDVGNYYYGQGHPMKPHRIRMTHNLLLNYGLYRKMEIYRPHKANAEEMTKYHSDDYIKFLRSIRPDNMSEYSKQMQRFNVGEDCPVFDGLFEFCQLSTGGSVASAVKLNKQQTDIAVNWAGGLHHAKKSEASGFCYVNDIVLAILELLKYHQRVLYIDIDIHHGDGVEEAFYTTDRVMTVSFHKYGEYFPGTGDLRDIGAGKGKYYAVNYPLRDGIDDESYEAIFKPVMSKVMEMFQPSAVVLQCGSDSLSGDRLGCFNLTIKGHAKCVEFVKSFNLPMLMLGGGGYTIRNVARCWTYETAVALDTEIPNELPYNDYFEYFGPDFKLHISPSNMTNQNTNEYLEKIKQRLFENLRMLPHAPGVQMQAIPEDAIPEESGDEDEEDPDKRISICSSDKRIACEEEFSDSDEEGEGGRKNSSNFKKAKRVKTEDEKEKDPEEKKEVTEEEKTKEEKQEAKGVKEEVKLA</sequence>
<reference key="1">
    <citation type="journal article" date="2005" name="BMC Genomics">
        <title>Characterization of 954 bovine full-CDS cDNA sequences.</title>
        <authorList>
            <person name="Harhay G.P."/>
            <person name="Sonstegard T.S."/>
            <person name="Keele J.W."/>
            <person name="Heaton M.P."/>
            <person name="Clawson M.L."/>
            <person name="Snelling W.M."/>
            <person name="Wiedmann R.T."/>
            <person name="Van Tassell C.P."/>
            <person name="Smith T.P.L."/>
        </authorList>
    </citation>
    <scope>NUCLEOTIDE SEQUENCE [LARGE SCALE MRNA]</scope>
</reference>
<reference key="2">
    <citation type="submission" date="2005-10" db="EMBL/GenBank/DDBJ databases">
        <authorList>
            <consortium name="NIH - Mammalian Gene Collection (MGC) project"/>
        </authorList>
    </citation>
    <scope>NUCLEOTIDE SEQUENCE [LARGE SCALE MRNA]</scope>
    <source>
        <strain>Crossbred X Angus</strain>
        <tissue>Ileum</tissue>
    </source>
</reference>
<proteinExistence type="evidence at transcript level"/>
<name>HDAC1_BOVIN</name>
<organism>
    <name type="scientific">Bos taurus</name>
    <name type="common">Bovine</name>
    <dbReference type="NCBI Taxonomy" id="9913"/>
    <lineage>
        <taxon>Eukaryota</taxon>
        <taxon>Metazoa</taxon>
        <taxon>Chordata</taxon>
        <taxon>Craniata</taxon>
        <taxon>Vertebrata</taxon>
        <taxon>Euteleostomi</taxon>
        <taxon>Mammalia</taxon>
        <taxon>Eutheria</taxon>
        <taxon>Laurasiatheria</taxon>
        <taxon>Artiodactyla</taxon>
        <taxon>Ruminantia</taxon>
        <taxon>Pecora</taxon>
        <taxon>Bovidae</taxon>
        <taxon>Bovinae</taxon>
        <taxon>Bos</taxon>
    </lineage>
</organism>
<feature type="chain" id="PRO_0000304729" description="Histone deacetylase 1">
    <location>
        <begin position="1"/>
        <end position="482"/>
    </location>
</feature>
<feature type="region of interest" description="Histone deacetylase">
    <location>
        <begin position="9"/>
        <end position="321"/>
    </location>
</feature>
<feature type="region of interest" description="Disordered" evidence="6">
    <location>
        <begin position="390"/>
        <end position="482"/>
    </location>
</feature>
<feature type="compositionally biased region" description="Acidic residues" evidence="6">
    <location>
        <begin position="390"/>
        <end position="400"/>
    </location>
</feature>
<feature type="compositionally biased region" description="Basic and acidic residues" evidence="6">
    <location>
        <begin position="401"/>
        <end position="416"/>
    </location>
</feature>
<feature type="compositionally biased region" description="Acidic residues" evidence="6">
    <location>
        <begin position="417"/>
        <end position="427"/>
    </location>
</feature>
<feature type="compositionally biased region" description="Basic and acidic residues" evidence="6">
    <location>
        <begin position="443"/>
        <end position="482"/>
    </location>
</feature>
<feature type="active site" evidence="4">
    <location>
        <position position="141"/>
    </location>
</feature>
<feature type="binding site" evidence="2">
    <location>
        <position position="27"/>
    </location>
    <ligand>
        <name>1D-myo-inositol 1,4,5,6-tetrakisphosphate</name>
        <dbReference type="ChEBI" id="CHEBI:57627"/>
    </ligand>
</feature>
<feature type="binding site" evidence="2">
    <location>
        <position position="31"/>
    </location>
    <ligand>
        <name>1D-myo-inositol 1,4,5,6-tetrakisphosphate</name>
        <dbReference type="ChEBI" id="CHEBI:57627"/>
    </ligand>
</feature>
<feature type="binding site" evidence="2">
    <location>
        <position position="176"/>
    </location>
    <ligand>
        <name>Zn(2+)</name>
        <dbReference type="ChEBI" id="CHEBI:29105"/>
    </ligand>
</feature>
<feature type="binding site" evidence="2">
    <location>
        <position position="178"/>
    </location>
    <ligand>
        <name>Zn(2+)</name>
        <dbReference type="ChEBI" id="CHEBI:29105"/>
    </ligand>
</feature>
<feature type="binding site" evidence="2">
    <location>
        <position position="264"/>
    </location>
    <ligand>
        <name>Zn(2+)</name>
        <dbReference type="ChEBI" id="CHEBI:29105"/>
    </ligand>
</feature>
<feature type="binding site" evidence="2">
    <location>
        <position position="270"/>
    </location>
    <ligand>
        <name>1D-myo-inositol 1,4,5,6-tetrakisphosphate</name>
        <dbReference type="ChEBI" id="CHEBI:57627"/>
    </ligand>
</feature>
<feature type="modified residue" description="N6-acetyllysine; alternate" evidence="4">
    <location>
        <position position="74"/>
    </location>
</feature>
<feature type="modified residue" description="N6-acetyllysine" evidence="4">
    <location>
        <position position="220"/>
    </location>
</feature>
<feature type="modified residue" description="S-nitrosocysteine" evidence="3">
    <location>
        <position position="261"/>
    </location>
</feature>
<feature type="modified residue" description="S-nitrosocysteine" evidence="3">
    <location>
        <position position="273"/>
    </location>
</feature>
<feature type="modified residue" description="Phosphoserine" evidence="4">
    <location>
        <position position="393"/>
    </location>
</feature>
<feature type="modified residue" description="Phosphoserine" evidence="5">
    <location>
        <position position="406"/>
    </location>
</feature>
<feature type="modified residue" description="Phosphoserine" evidence="4">
    <location>
        <position position="409"/>
    </location>
</feature>
<feature type="modified residue" description="Phosphoserine" evidence="4">
    <location>
        <position position="421"/>
    </location>
</feature>
<feature type="modified residue" description="Phosphoserine" evidence="4">
    <location>
        <position position="423"/>
    </location>
</feature>
<feature type="modified residue" description="N6-methylated lysine; by EHMT2" evidence="4">
    <location>
        <position position="432"/>
    </location>
</feature>
<feature type="cross-link" description="Glycyl lysine isopeptide (Lys-Gly) (interchain with G-Cter in SUMO2); alternate" evidence="5">
    <location>
        <position position="74"/>
    </location>
</feature>
<feature type="cross-link" description="Glycyl lysine isopeptide (Lys-Gly) (interchain with G-Cter in SUMO2)" evidence="4">
    <location>
        <position position="438"/>
    </location>
</feature>
<feature type="cross-link" description="Glycyl lysine isopeptide (Lys-Gly) (interchain with G-Cter in SUMO); alternate" evidence="4">
    <location>
        <position position="444"/>
    </location>
</feature>
<feature type="cross-link" description="Glycyl lysine isopeptide (Lys-Gly) (interchain with G-Cter in SUMO2); alternate" evidence="4">
    <location>
        <position position="444"/>
    </location>
</feature>
<feature type="cross-link" description="Glycyl lysine isopeptide (Lys-Gly) (interchain with G-Cter in SUMO2)" evidence="5">
    <location>
        <position position="456"/>
    </location>
</feature>
<feature type="cross-link" description="Glycyl lysine isopeptide (Lys-Gly) (interchain with G-Cter in SUMO2)" evidence="4">
    <location>
        <position position="457"/>
    </location>
</feature>
<feature type="cross-link" description="Glycyl lysine isopeptide (Lys-Gly) (interchain with G-Cter in SUMO2)" evidence="5">
    <location>
        <position position="473"/>
    </location>
</feature>
<feature type="cross-link" description="Glycyl lysine isopeptide (Lys-Gly) (interchain with G-Cter in SUMO); alternate" evidence="4">
    <location>
        <position position="476"/>
    </location>
</feature>
<feature type="cross-link" description="Glycyl lysine isopeptide (Lys-Gly) (interchain with G-Cter in SUMO2); alternate" evidence="4">
    <location>
        <position position="476"/>
    </location>
</feature>
<feature type="cross-link" description="Glycyl lysine isopeptide (Lys-Gly) (interchain with G-Cter in SUMO2)" evidence="4">
    <location>
        <position position="480"/>
    </location>
</feature>
<keyword id="KW-0007">Acetylation</keyword>
<keyword id="KW-0090">Biological rhythms</keyword>
<keyword id="KW-0156">Chromatin regulator</keyword>
<keyword id="KW-0378">Hydrolase</keyword>
<keyword id="KW-1017">Isopeptide bond</keyword>
<keyword id="KW-0479">Metal-binding</keyword>
<keyword id="KW-0488">Methylation</keyword>
<keyword id="KW-0539">Nucleus</keyword>
<keyword id="KW-0597">Phosphoprotein</keyword>
<keyword id="KW-1185">Reference proteome</keyword>
<keyword id="KW-0678">Repressor</keyword>
<keyword id="KW-0702">S-nitrosylation</keyword>
<keyword id="KW-0804">Transcription</keyword>
<keyword id="KW-0805">Transcription regulation</keyword>
<keyword id="KW-0832">Ubl conjugation</keyword>
<keyword id="KW-0862">Zinc</keyword>
<dbReference type="EC" id="3.5.1.98" evidence="4"/>
<dbReference type="EC" id="3.5.1.-" evidence="4"/>
<dbReference type="EMBL" id="BT030718">
    <property type="protein sequence ID" value="ABS45034.1"/>
    <property type="molecule type" value="mRNA"/>
</dbReference>
<dbReference type="EMBL" id="BC108088">
    <property type="protein sequence ID" value="AAI08089.1"/>
    <property type="molecule type" value="mRNA"/>
</dbReference>
<dbReference type="RefSeq" id="NP_001032521.1">
    <property type="nucleotide sequence ID" value="NM_001037444.2"/>
</dbReference>
<dbReference type="SMR" id="Q32PJ8"/>
<dbReference type="FunCoup" id="Q32PJ8">
    <property type="interactions" value="4186"/>
</dbReference>
<dbReference type="STRING" id="9913.ENSBTAP00000070647"/>
<dbReference type="PaxDb" id="9913-ENSBTAP00000016877"/>
<dbReference type="Ensembl" id="ENSBTAT00000016877.7">
    <property type="protein sequence ID" value="ENSBTAP00000016877.5"/>
    <property type="gene ID" value="ENSBTAG00000012698.7"/>
</dbReference>
<dbReference type="GeneID" id="404126"/>
<dbReference type="KEGG" id="bta:404126"/>
<dbReference type="CTD" id="3065"/>
<dbReference type="VEuPathDB" id="HostDB:ENSBTAG00000012698"/>
<dbReference type="VGNC" id="VGNC:49065">
    <property type="gene designation" value="HDAC1"/>
</dbReference>
<dbReference type="eggNOG" id="KOG1342">
    <property type="taxonomic scope" value="Eukaryota"/>
</dbReference>
<dbReference type="GeneTree" id="ENSGT00940000154301"/>
<dbReference type="HOGENOM" id="CLU_007727_7_4_1"/>
<dbReference type="InParanoid" id="Q32PJ8"/>
<dbReference type="OMA" id="EHRWDKH"/>
<dbReference type="OrthoDB" id="1918432at2759"/>
<dbReference type="TreeFam" id="TF106171"/>
<dbReference type="Reactome" id="R-BTA-1538133">
    <property type="pathway name" value="G0 and Early G1"/>
</dbReference>
<dbReference type="Reactome" id="R-BTA-201722">
    <property type="pathway name" value="Formation of the beta-catenin:TCF transactivating complex"/>
</dbReference>
<dbReference type="Reactome" id="R-BTA-2173795">
    <property type="pathway name" value="Downregulation of SMAD2/3:SMAD4 transcriptional activity"/>
</dbReference>
<dbReference type="Reactome" id="R-BTA-3214815">
    <property type="pathway name" value="HDACs deacetylate histones"/>
</dbReference>
<dbReference type="Reactome" id="R-BTA-350054">
    <property type="pathway name" value="Notch-HLH transcription pathway"/>
</dbReference>
<dbReference type="Reactome" id="R-BTA-3769402">
    <property type="pathway name" value="Deactivation of the beta-catenin transactivating complex"/>
</dbReference>
<dbReference type="Reactome" id="R-BTA-4551638">
    <property type="pathway name" value="SUMOylation of chromatin organization proteins"/>
</dbReference>
<dbReference type="Reactome" id="R-BTA-6804758">
    <property type="pathway name" value="Regulation of TP53 Activity through Acetylation"/>
</dbReference>
<dbReference type="Reactome" id="R-BTA-73762">
    <property type="pathway name" value="RNA Polymerase I Transcription Initiation"/>
</dbReference>
<dbReference type="Reactome" id="R-BTA-8936459">
    <property type="pathway name" value="RUNX1 regulates genes involved in megakaryocyte differentiation and platelet function"/>
</dbReference>
<dbReference type="Reactome" id="R-BTA-8943724">
    <property type="pathway name" value="Regulation of PTEN gene transcription"/>
</dbReference>
<dbReference type="Reactome" id="R-BTA-9018519">
    <property type="pathway name" value="Estrogen-dependent gene expression"/>
</dbReference>
<dbReference type="Reactome" id="R-BTA-9022692">
    <property type="pathway name" value="Regulation of MECP2 expression and activity"/>
</dbReference>
<dbReference type="Reactome" id="R-BTA-9701898">
    <property type="pathway name" value="STAT3 nuclear events downstream of ALK signaling"/>
</dbReference>
<dbReference type="Reactome" id="R-BTA-9824594">
    <property type="pathway name" value="Regulation of MITF-M-dependent genes involved in apoptosis"/>
</dbReference>
<dbReference type="Reactome" id="R-BTA-9825892">
    <property type="pathway name" value="Regulation of MITF-M-dependent genes involved in cell cycle and proliferation"/>
</dbReference>
<dbReference type="Reactome" id="R-BTA-983231">
    <property type="pathway name" value="Factors involved in megakaryocyte development and platelet production"/>
</dbReference>
<dbReference type="Proteomes" id="UP000009136">
    <property type="component" value="Chromosome 2"/>
</dbReference>
<dbReference type="Bgee" id="ENSBTAG00000012698">
    <property type="expression patterns" value="Expressed in ruminant reticulum and 102 other cell types or tissues"/>
</dbReference>
<dbReference type="GO" id="GO:0005829">
    <property type="term" value="C:cytosol"/>
    <property type="evidence" value="ECO:0007669"/>
    <property type="project" value="Ensembl"/>
</dbReference>
<dbReference type="GO" id="GO:0000792">
    <property type="term" value="C:heterochromatin"/>
    <property type="evidence" value="ECO:0007669"/>
    <property type="project" value="Ensembl"/>
</dbReference>
<dbReference type="GO" id="GO:0043025">
    <property type="term" value="C:neuronal cell body"/>
    <property type="evidence" value="ECO:0007669"/>
    <property type="project" value="Ensembl"/>
</dbReference>
<dbReference type="GO" id="GO:0005634">
    <property type="term" value="C:nucleus"/>
    <property type="evidence" value="ECO:0000250"/>
    <property type="project" value="UniProtKB"/>
</dbReference>
<dbReference type="GO" id="GO:0016581">
    <property type="term" value="C:NuRD complex"/>
    <property type="evidence" value="ECO:0000250"/>
    <property type="project" value="UniProtKB"/>
</dbReference>
<dbReference type="GO" id="GO:0070822">
    <property type="term" value="C:Sin3-type complex"/>
    <property type="evidence" value="ECO:0007669"/>
    <property type="project" value="Ensembl"/>
</dbReference>
<dbReference type="GO" id="GO:0017053">
    <property type="term" value="C:transcription repressor complex"/>
    <property type="evidence" value="ECO:0007669"/>
    <property type="project" value="Ensembl"/>
</dbReference>
<dbReference type="GO" id="GO:0070888">
    <property type="term" value="F:E-box binding"/>
    <property type="evidence" value="ECO:0007669"/>
    <property type="project" value="Ensembl"/>
</dbReference>
<dbReference type="GO" id="GO:0004407">
    <property type="term" value="F:histone deacetylase activity"/>
    <property type="evidence" value="ECO:0000250"/>
    <property type="project" value="UniProtKB"/>
</dbReference>
<dbReference type="GO" id="GO:0141221">
    <property type="term" value="F:histone deacetylase activity, hydrolytic mechanism"/>
    <property type="evidence" value="ECO:0007669"/>
    <property type="project" value="UniProtKB-EC"/>
</dbReference>
<dbReference type="GO" id="GO:0042826">
    <property type="term" value="F:histone deacetylase binding"/>
    <property type="evidence" value="ECO:0007669"/>
    <property type="project" value="Ensembl"/>
</dbReference>
<dbReference type="GO" id="GO:0160009">
    <property type="term" value="F:histone decrotonylase activity"/>
    <property type="evidence" value="ECO:0000250"/>
    <property type="project" value="UniProtKB"/>
</dbReference>
<dbReference type="GO" id="GO:0035851">
    <property type="term" value="F:Krueppel-associated box domain binding"/>
    <property type="evidence" value="ECO:0007669"/>
    <property type="project" value="Ensembl"/>
</dbReference>
<dbReference type="GO" id="GO:0046872">
    <property type="term" value="F:metal ion binding"/>
    <property type="evidence" value="ECO:0007669"/>
    <property type="project" value="UniProtKB-KW"/>
</dbReference>
<dbReference type="GO" id="GO:0051059">
    <property type="term" value="F:NF-kappaB binding"/>
    <property type="evidence" value="ECO:0007669"/>
    <property type="project" value="Ensembl"/>
</dbReference>
<dbReference type="GO" id="GO:0002039">
    <property type="term" value="F:p53 binding"/>
    <property type="evidence" value="ECO:0007669"/>
    <property type="project" value="Ensembl"/>
</dbReference>
<dbReference type="GO" id="GO:1990841">
    <property type="term" value="F:promoter-specific chromatin binding"/>
    <property type="evidence" value="ECO:0007669"/>
    <property type="project" value="Ensembl"/>
</dbReference>
<dbReference type="GO" id="GO:0033558">
    <property type="term" value="F:protein lysine deacetylase activity"/>
    <property type="evidence" value="ECO:0000250"/>
    <property type="project" value="UniProtKB"/>
</dbReference>
<dbReference type="GO" id="GO:0160216">
    <property type="term" value="F:protein lysine delactylase activity"/>
    <property type="evidence" value="ECO:0000250"/>
    <property type="project" value="UniProtKB"/>
</dbReference>
<dbReference type="GO" id="GO:0000979">
    <property type="term" value="F:RNA polymerase II core promoter sequence-specific DNA binding"/>
    <property type="evidence" value="ECO:0007669"/>
    <property type="project" value="Ensembl"/>
</dbReference>
<dbReference type="GO" id="GO:0003714">
    <property type="term" value="F:transcription corepressor activity"/>
    <property type="evidence" value="ECO:0007669"/>
    <property type="project" value="Ensembl"/>
</dbReference>
<dbReference type="GO" id="GO:0001222">
    <property type="term" value="F:transcription corepressor binding"/>
    <property type="evidence" value="ECO:0007669"/>
    <property type="project" value="Ensembl"/>
</dbReference>
<dbReference type="GO" id="GO:0032922">
    <property type="term" value="P:circadian regulation of gene expression"/>
    <property type="evidence" value="ECO:0000250"/>
    <property type="project" value="UniProtKB"/>
</dbReference>
<dbReference type="GO" id="GO:0006346">
    <property type="term" value="P:DNA methylation-dependent constitutive heterochromatin formation"/>
    <property type="evidence" value="ECO:0007669"/>
    <property type="project" value="Ensembl"/>
</dbReference>
<dbReference type="GO" id="GO:0042733">
    <property type="term" value="P:embryonic digit morphogenesis"/>
    <property type="evidence" value="ECO:0007669"/>
    <property type="project" value="Ensembl"/>
</dbReference>
<dbReference type="GO" id="GO:0007492">
    <property type="term" value="P:endoderm development"/>
    <property type="evidence" value="ECO:0007669"/>
    <property type="project" value="Ensembl"/>
</dbReference>
<dbReference type="GO" id="GO:0009913">
    <property type="term" value="P:epidermal cell differentiation"/>
    <property type="evidence" value="ECO:0007669"/>
    <property type="project" value="Ensembl"/>
</dbReference>
<dbReference type="GO" id="GO:0061029">
    <property type="term" value="P:eyelid development in camera-type eye"/>
    <property type="evidence" value="ECO:0007669"/>
    <property type="project" value="Ensembl"/>
</dbReference>
<dbReference type="GO" id="GO:0061198">
    <property type="term" value="P:fungiform papilla formation"/>
    <property type="evidence" value="ECO:0007669"/>
    <property type="project" value="Ensembl"/>
</dbReference>
<dbReference type="GO" id="GO:0060789">
    <property type="term" value="P:hair follicle placode formation"/>
    <property type="evidence" value="ECO:0007669"/>
    <property type="project" value="Ensembl"/>
</dbReference>
<dbReference type="GO" id="GO:0031507">
    <property type="term" value="P:heterochromatin formation"/>
    <property type="evidence" value="ECO:0000318"/>
    <property type="project" value="GO_Central"/>
</dbReference>
<dbReference type="GO" id="GO:0021766">
    <property type="term" value="P:hippocampus development"/>
    <property type="evidence" value="ECO:0007669"/>
    <property type="project" value="Ensembl"/>
</dbReference>
<dbReference type="GO" id="GO:0043922">
    <property type="term" value="P:negative regulation by host of viral transcription"/>
    <property type="evidence" value="ECO:0007669"/>
    <property type="project" value="Ensembl"/>
</dbReference>
<dbReference type="GO" id="GO:0060766">
    <property type="term" value="P:negative regulation of androgen receptor signaling pathway"/>
    <property type="evidence" value="ECO:0007669"/>
    <property type="project" value="Ensembl"/>
</dbReference>
<dbReference type="GO" id="GO:0043124">
    <property type="term" value="P:negative regulation of canonical NF-kappaB signal transduction"/>
    <property type="evidence" value="ECO:0007669"/>
    <property type="project" value="Ensembl"/>
</dbReference>
<dbReference type="GO" id="GO:0090090">
    <property type="term" value="P:negative regulation of canonical Wnt signaling pathway"/>
    <property type="evidence" value="ECO:0007669"/>
    <property type="project" value="Ensembl"/>
</dbReference>
<dbReference type="GO" id="GO:0045892">
    <property type="term" value="P:negative regulation of DNA-templated transcription"/>
    <property type="evidence" value="ECO:0000250"/>
    <property type="project" value="UniProtKB"/>
</dbReference>
<dbReference type="GO" id="GO:2001243">
    <property type="term" value="P:negative regulation of intrinsic apoptotic signaling pathway"/>
    <property type="evidence" value="ECO:0007669"/>
    <property type="project" value="Ensembl"/>
</dbReference>
<dbReference type="GO" id="GO:0000122">
    <property type="term" value="P:negative regulation of transcription by RNA polymerase II"/>
    <property type="evidence" value="ECO:0007669"/>
    <property type="project" value="Ensembl"/>
</dbReference>
<dbReference type="GO" id="GO:0030182">
    <property type="term" value="P:neuron differentiation"/>
    <property type="evidence" value="ECO:0007669"/>
    <property type="project" value="Ensembl"/>
</dbReference>
<dbReference type="GO" id="GO:0042475">
    <property type="term" value="P:odontogenesis of dentin-containing tooth"/>
    <property type="evidence" value="ECO:0007669"/>
    <property type="project" value="Ensembl"/>
</dbReference>
<dbReference type="GO" id="GO:0048709">
    <property type="term" value="P:oligodendrocyte differentiation"/>
    <property type="evidence" value="ECO:0007669"/>
    <property type="project" value="Ensembl"/>
</dbReference>
<dbReference type="GO" id="GO:0008284">
    <property type="term" value="P:positive regulation of cell population proliferation"/>
    <property type="evidence" value="ECO:0007669"/>
    <property type="project" value="Ensembl"/>
</dbReference>
<dbReference type="GO" id="GO:0033148">
    <property type="term" value="P:positive regulation of intracellular estrogen receptor signaling pathway"/>
    <property type="evidence" value="ECO:0007669"/>
    <property type="project" value="Ensembl"/>
</dbReference>
<dbReference type="GO" id="GO:0048714">
    <property type="term" value="P:positive regulation of oligodendrocyte differentiation"/>
    <property type="evidence" value="ECO:0007669"/>
    <property type="project" value="Ensembl"/>
</dbReference>
<dbReference type="GO" id="GO:0045944">
    <property type="term" value="P:positive regulation of transcription by RNA polymerase II"/>
    <property type="evidence" value="ECO:0007669"/>
    <property type="project" value="Ensembl"/>
</dbReference>
<dbReference type="CDD" id="cd10010">
    <property type="entry name" value="HDAC1"/>
    <property type="match status" value="1"/>
</dbReference>
<dbReference type="FunFam" id="3.40.800.20:FF:000003">
    <property type="entry name" value="Histone deacetylase"/>
    <property type="match status" value="1"/>
</dbReference>
<dbReference type="Gene3D" id="3.40.800.20">
    <property type="entry name" value="Histone deacetylase domain"/>
    <property type="match status" value="1"/>
</dbReference>
<dbReference type="InterPro" id="IPR050284">
    <property type="entry name" value="HDAC_PDAC"/>
</dbReference>
<dbReference type="InterPro" id="IPR000286">
    <property type="entry name" value="His_deacetylse"/>
</dbReference>
<dbReference type="InterPro" id="IPR003084">
    <property type="entry name" value="His_deacetylse_1"/>
</dbReference>
<dbReference type="InterPro" id="IPR023801">
    <property type="entry name" value="His_deacetylse_dom"/>
</dbReference>
<dbReference type="InterPro" id="IPR037138">
    <property type="entry name" value="His_deacetylse_dom_sf"/>
</dbReference>
<dbReference type="InterPro" id="IPR023696">
    <property type="entry name" value="Ureohydrolase_dom_sf"/>
</dbReference>
<dbReference type="PANTHER" id="PTHR10625:SF49">
    <property type="entry name" value="HISTONE DEACETYLASE 1"/>
    <property type="match status" value="1"/>
</dbReference>
<dbReference type="PANTHER" id="PTHR10625">
    <property type="entry name" value="HISTONE DEACETYLASE HDAC1-RELATED"/>
    <property type="match status" value="1"/>
</dbReference>
<dbReference type="Pfam" id="PF00850">
    <property type="entry name" value="Hist_deacetyl"/>
    <property type="match status" value="1"/>
</dbReference>
<dbReference type="PIRSF" id="PIRSF037913">
    <property type="entry name" value="His_deacetylse_1"/>
    <property type="match status" value="1"/>
</dbReference>
<dbReference type="PRINTS" id="PR01270">
    <property type="entry name" value="HDASUPER"/>
</dbReference>
<dbReference type="PRINTS" id="PR01271">
    <property type="entry name" value="HISDACETLASE"/>
</dbReference>
<dbReference type="SUPFAM" id="SSF52768">
    <property type="entry name" value="Arginase/deacetylase"/>
    <property type="match status" value="1"/>
</dbReference>
<evidence type="ECO:0000250" key="1">
    <source>
        <dbReference type="UniProtKB" id="O09106"/>
    </source>
</evidence>
<evidence type="ECO:0000250" key="2">
    <source>
        <dbReference type="UniProtKB" id="O15379"/>
    </source>
</evidence>
<evidence type="ECO:0000250" key="3">
    <source>
        <dbReference type="UniProtKB" id="P70288"/>
    </source>
</evidence>
<evidence type="ECO:0000250" key="4">
    <source>
        <dbReference type="UniProtKB" id="Q13547"/>
    </source>
</evidence>
<evidence type="ECO:0000250" key="5">
    <source>
        <dbReference type="UniProtKB" id="Q92769"/>
    </source>
</evidence>
<evidence type="ECO:0000256" key="6">
    <source>
        <dbReference type="SAM" id="MobiDB-lite"/>
    </source>
</evidence>
<evidence type="ECO:0000305" key="7"/>
<comment type="function">
    <text evidence="1 4">Histone deacetylase that catalyzes the deacetylation of lysine residues on the N-terminal part of the core histones (H2A, H2B, H3 and H4). Histone deacetylation gives a tag for epigenetic repression and plays an important role in transcriptional regulation, cell cycle progression and developmental events. Histone deacetylases act via the formation of large multiprotein complexes (By similarity). Acts as a component of the histone deacetylase NuRD complex which participates in the remodeling of chromatin (By similarity). As part of the SIN3B complex is recruited downstream of the constitutively active genes transcriptional start sites through interaction with histones and mitigates histone acetylation and RNA polymerase II progression within transcribed regions contributing to the regulation of transcription (By similarity). Also functions as a deacetylase for non-histone targets, such as NR1D2, RELA, SP1, SP3, STAT3 and TSHZ3 (By similarity). Deacetylates SP proteins, SP1 and SP3, and regulates their function (By similarity). Component of the BRG1-RB1-HDAC1 complex, which negatively regulates the CREST-mediated transcription in resting neurons (By similarity). Upon calcium stimulation, HDAC1 is released from the complex and CREBBP is recruited, which facilitates transcriptional activation (By similarity). Deacetylates TSHZ3 and regulates its transcriptional repressor activity (By similarity). Deacetylates 'Lys-310' in RELA and thereby inhibits the transcriptional activity of NF-kappa-B (By similarity). Deacetylates NR1D2 and abrogates the effect of KAT5-mediated relieving of NR1D2 transcription repression activity (By similarity). Component of a RCOR/GFI/KDM1A/HDAC complex that suppresses, via histone deacetylase (HDAC) recruitment, a number of genes implicated in multilineage blood cell development. Involved in CIART-mediated transcriptional repression of the circadian transcriptional activator: CLOCK-BMAL1 heterodimer. Required for the transcriptional repression of circadian target genes, such as PER1, mediated by the large PER complex or CRY1 through histone deacetylation. In addition to protein deacetylase activity, also has protein-lysine deacylase activity: acts as a protein decrotonylase and delactylase by mediating decrotonylation ((2E)-butenoyl) and delactylation (lactoyl) of histones, respectively (By similarity).</text>
</comment>
<comment type="catalytic activity">
    <reaction evidence="4">
        <text>N(6)-acetyl-L-lysyl-[histone] + H2O = L-lysyl-[histone] + acetate</text>
        <dbReference type="Rhea" id="RHEA:58196"/>
        <dbReference type="Rhea" id="RHEA-COMP:9845"/>
        <dbReference type="Rhea" id="RHEA-COMP:11338"/>
        <dbReference type="ChEBI" id="CHEBI:15377"/>
        <dbReference type="ChEBI" id="CHEBI:29969"/>
        <dbReference type="ChEBI" id="CHEBI:30089"/>
        <dbReference type="ChEBI" id="CHEBI:61930"/>
        <dbReference type="EC" id="3.5.1.98"/>
    </reaction>
    <physiologicalReaction direction="left-to-right" evidence="4">
        <dbReference type="Rhea" id="RHEA:58197"/>
    </physiologicalReaction>
</comment>
<comment type="catalytic activity">
    <reaction evidence="4">
        <text>N(6)-acetyl-L-lysyl-[protein] + H2O = L-lysyl-[protein] + acetate</text>
        <dbReference type="Rhea" id="RHEA:58108"/>
        <dbReference type="Rhea" id="RHEA-COMP:9752"/>
        <dbReference type="Rhea" id="RHEA-COMP:10731"/>
        <dbReference type="ChEBI" id="CHEBI:15377"/>
        <dbReference type="ChEBI" id="CHEBI:29969"/>
        <dbReference type="ChEBI" id="CHEBI:30089"/>
        <dbReference type="ChEBI" id="CHEBI:61930"/>
    </reaction>
    <physiologicalReaction direction="left-to-right" evidence="4">
        <dbReference type="Rhea" id="RHEA:58109"/>
    </physiologicalReaction>
</comment>
<comment type="catalytic activity">
    <reaction evidence="4">
        <text>N(6)-(2E)-butenoyl-L-lysyl-[protein] + H2O = (2E)-2-butenoate + L-lysyl-[protein]</text>
        <dbReference type="Rhea" id="RHEA:69172"/>
        <dbReference type="Rhea" id="RHEA-COMP:9752"/>
        <dbReference type="Rhea" id="RHEA-COMP:13707"/>
        <dbReference type="ChEBI" id="CHEBI:15377"/>
        <dbReference type="ChEBI" id="CHEBI:29969"/>
        <dbReference type="ChEBI" id="CHEBI:35899"/>
        <dbReference type="ChEBI" id="CHEBI:137954"/>
    </reaction>
    <physiologicalReaction direction="left-to-right" evidence="4">
        <dbReference type="Rhea" id="RHEA:69173"/>
    </physiologicalReaction>
</comment>
<comment type="catalytic activity">
    <reaction evidence="4">
        <text>N(6)-[(S)-lactoyl]-L-lysyl-[protein] + H2O = (S)-lactate + L-lysyl-[protein]</text>
        <dbReference type="Rhea" id="RHEA:81387"/>
        <dbReference type="Rhea" id="RHEA-COMP:9752"/>
        <dbReference type="Rhea" id="RHEA-COMP:19466"/>
        <dbReference type="ChEBI" id="CHEBI:15377"/>
        <dbReference type="ChEBI" id="CHEBI:16651"/>
        <dbReference type="ChEBI" id="CHEBI:29969"/>
        <dbReference type="ChEBI" id="CHEBI:231527"/>
    </reaction>
    <physiologicalReaction direction="left-to-right" evidence="4">
        <dbReference type="Rhea" id="RHEA:81388"/>
    </physiologicalReaction>
</comment>
<comment type="cofactor">
    <cofactor evidence="2">
        <name>Zn(2+)</name>
        <dbReference type="ChEBI" id="CHEBI:29105"/>
    </cofactor>
</comment>
<comment type="activity regulation">
    <text evidence="2">Inositol tetraphosphate (1D-myo-inositol 1,4,5,6-tetrakisphosphate) may act as an intermolecular glue between HDAC1 and N-Cor repressor complex components.</text>
</comment>
<comment type="subunit">
    <text evidence="1 4">Part of the core histone deacetylase (HDAC) complex composed of HDAC1, HDAC2, RBBP4 and RBBP7, the core complex associates with SIN3, SAP18 and SAP30 to form the SIN3 HDAC complex. Component of the nucleosome remodeling and deacetylase (NuRD) repressor complex, composed of core proteins MTA1, MTA2, MTA3, RBBP4, RBBP7, HDAC1, HDAC2, MBD2, MBD3, and peripherally associated proteins CDK2AP1, CDK2AP2, GATAD2A, GATAD2B, CHD3, CHD4 and CHD5. The exact stoichiometry of the NuRD complex is unknown, and some subunits such as MBD2 and MBD3, GATAD2A and GATAD2B, and CHD3, CHD4 and CHD5 define mutually exclusive NuRD complexes (By similarity). Component of a BHC histone deacetylase complex that contains HDAC1, HDAC2, HMG20B/BRAF35, KDM1A, RCOR1/CoREST and PHF21A/BHC80 (By similarity). The BHC complex may also contain ZMYM2, ZNF217, ZMYM3, GSE1 and GTF2I (By similarity). Component of a mSin3A corepressor complex that contains SIN3A, SAP130, SUDS3/SAP45, ARID4B/SAP180, HDAC1 and HDAC2 (By similarity). Found in a trimeric complex with APBB1 and TSHZ3; the interaction between HDAC1 and APBB1 is mediated by TSHZ3 (By similarity). Forms a complex comprising APPL1, RUVBL2, APPL2, CTNNB1 and HDAC2 (By similarity). Component of a RCOR/GFI/KDM1A/HDAC complex (By similarity). Part of a complex composed of TRIM28, HDAC1, HDAC2 and EHMT2 (By similarity). Part of a complex containing at least CDYL, MIER1, MIER2, HDAC1 and HDAC2 (By similarity). The large PER complex involved in the histone deacetylation is composed of at least HDAC1, PER2, SFPQ and SIN3A (By similarity). Associates with the 9-1-1 complex; interacts with HUS1 (By similarity). Found in a complex with DNMT3A and HDAC7. Found in a complex with YY1, SIN3A and GON4L (By similarity). Identified in a histone deacetylase complex that contains DNTTIP1, HDAC1 and MIDEAS; this complex assembles into a tetramer that contains four copies of each protein chain (By similarity). Found in a complex composed of at least SINHCAF, SIN3A, HDAC1, SAP30, RBBP4, OGT and TET1 (By similarity). Component of the SIN3B complex, which includes SIN3B, HDAC1, PHF12 and MORF4L1 (By similarity). Interacts with GFI1; the interaction is direct. Interacts directly with GFI1B (By similarity). Interacts with TSHZ3 (via N-terminus); the interaction is direct (By similarity). Interacts with APEX1; the interaction is not dependent on the acetylated status of APEX1 (By similarity). Interacts with BANP. Interacts with BAZ2A/TIP5 (By similarity). Interacts with BCL6 (By similarity). Interacts with BCOR (By similarity). Interacts with BHLHE40/DEC1 (By similarity). Interacts with BRCC3; this interaction is enhanced in the presence of PWWP2B (By similarity). Interacts with BRMS1 (By similarity). Interacts with BRMS1L (By similarity). Interacts with C10orf90/FATS (via its N-terminal); the interaction prevents binding of HDAC1 to CDKN1A/p21 and facilitates the acetylation and stabilization of CDKN1A/p21. Interacts with CBFA2T3 (By similarity). Interacts with CCAR2 (By similarity). Interacts with CDK2AP1 (By similarity). Interacts with CHD3 (By similarity). Interacts with CHD4 (By similarity). Interacts with CHFR (By similarity). Interacts with CIART. Interacts with CDKN1A/p21. Interacts with CDK5 complexed to CDK5R1 (p25). Interacts with CRY1 (By similarity). Interacts with DAXX (By similarity). Interacts with DDIT3/CHOP (By similarity). Interacts with DDX5 (By similarity). Interacts with DHX36; this interaction occurs in a RNA-dependent manner (By similarity). Interacts with DNMT1 (By similarity). Interacts with DNTTIP1 (By similarity). Interacts with E4F1 (By similarity). Interacts with EP300 (By similarity). Interacts with ERCC6 (By similarity). Interacts with GATAD2A (By similarity). Interacts with HCFC1 (By similarity). Interacts with HDAC9 (By similarity). Interacts with HUS1 (By similarity). Interacts with INSM1 (By similarity). Interacts with KDM4A (By similarity). Interacts with KDM5A; this interaction impairs histone deacetylation (By similarity). Interacts with KDM5B (By similarity). Interacts with KLF1 (By similarity). Interacts with MBD3L2 (By similarity). Interacts with MIER1 (By similarity). Interacts with NFE4 (By similarity). Interacts with NR4A2/NURR1 (By similarity). Interacts with NR1D2 (via C-terminus) (By similarity). Interacts with NRIP1. Interacts with NSD2 (By similarity). Interacts with PACS2 (By similarity). Interacts with PHB2 (By similarity). Interacts with PPHLN1 (By similarity). Interacts with PRDM6 (By similarity). Interacts with PRDM16 (By similarity). Interacts with PWWP2A in a MTA1-dependent manner. Interacts with PWWP2B (By similarity). Interacts with RB1 (By similarity). Interacts with RERE. Interacts with SANBR (via the BTB domain). Interacts with SAMSN1 (By similarity). Interacts with SAP30L (By similarity). Interacts with SETDB1 (By similarity). Interacts with SIN3A (By similarity). Interacts with SMAD3 (By similarity). Interacts with SMAD4; positively regulated by ZBTB7A (By similarity). Interacts with SMARCAD1 (By similarity). Interacts with SMARCA4/BRG1 (By similarity). Interacts with SMYD2 (By similarity). Interacts with SMYD4 (via MYND-type zinc finger) (By similarity). Interacts with SP1; the interaction deacetylates SP1 and regulates its transcriptional activity (By similarity). Interacts with SP3; the interaction deacetylates SP3 and regulates its transcriptional activity (By similarity). In vitro, C(18) ceramides increase this interaction and the subsequent SP3 deacetylation and SP3-mediated repression of the TERT promoter (By similarity). Interacts with SPEN/MINT (By similarity). Interacts with SPHK2 (By similarity). Interacts with SUV39H1 (By similarity). Interacts with TGIF (By similarity). Interacts with TGIF2 (By similarity). Interacts with TRAF6 (By similarity). Interacts with TRIM28; the interaction recruits HDAC1 to E2F1 and inhibits its acetylation (By similarity). Interacts with TSC22D3 isoform 1; this interaction affects HDAC1 activity on MYOG promoter and thus inhibits MYOD1 transcriptional activity (By similarity). Interacts with UHRF1 (By similarity). Interacts with UHRF2 (By similarity). Interacts with ZBTB7A (By similarity). Interacts with ZMYND8 (By similarity). Interacts with ZMYND15. Interacts with ZNF431. Interacts with ZNF516; this interaction is enhanced in the presence of PWWP2B. Interacts with ZNF541 (By similarity). Interacts with ZNF638 (By similarity). Interacts with ZNHIT1. Interacts with the non-histone region of MACROH2A1. Identified in a complex with HDAC2, KCTD19, DNTTIP1 and ZNF541. Interacts with MSX3 (By similarity). Interacts with VRK1 (By similarity).</text>
</comment>
<comment type="subcellular location">
    <subcellularLocation>
        <location evidence="4">Nucleus</location>
    </subcellularLocation>
</comment>
<comment type="PTM">
    <text evidence="4">Sumoylated on Lys-444 and Lys-476; which promotes enzymatic activity. Desumoylated by SENP1.</text>
</comment>
<comment type="PTM">
    <text evidence="4">Phosphorylation on Ser-421 and Ser-423 promotes enzymatic activity and interactions with NuRD and SIN3 complexes. Phosphorylated by CDK5.</text>
</comment>
<comment type="PTM">
    <text evidence="4">Ubiquitinated by CHFR and KCTD11, leading to its degradation by the proteasome.</text>
</comment>
<comment type="similarity">
    <text evidence="7">Belongs to the histone deacetylase family. HD type 1 subfamily.</text>
</comment>